<proteinExistence type="inferred from homology"/>
<keyword id="KW-0997">Cell inner membrane</keyword>
<keyword id="KW-1003">Cell membrane</keyword>
<keyword id="KW-0472">Membrane</keyword>
<keyword id="KW-0520">NAD</keyword>
<keyword id="KW-0874">Quinone</keyword>
<keyword id="KW-1278">Translocase</keyword>
<keyword id="KW-0813">Transport</keyword>
<keyword id="KW-0830">Ubiquinone</keyword>
<evidence type="ECO:0000255" key="1">
    <source>
        <dbReference type="HAMAP-Rule" id="MF_01357"/>
    </source>
</evidence>
<comment type="function">
    <text evidence="1">NDH-1 shuttles electrons from NADH, via FMN and iron-sulfur (Fe-S) centers, to quinones in the respiratory chain. The immediate electron acceptor for the enzyme in this species is believed to be ubiquinone. Couples the redox reaction to proton translocation (for every two electrons transferred, four hydrogen ions are translocated across the cytoplasmic membrane), and thus conserves the redox energy in a proton gradient.</text>
</comment>
<comment type="catalytic activity">
    <reaction evidence="1">
        <text>a quinone + NADH + 5 H(+)(in) = a quinol + NAD(+) + 4 H(+)(out)</text>
        <dbReference type="Rhea" id="RHEA:57888"/>
        <dbReference type="ChEBI" id="CHEBI:15378"/>
        <dbReference type="ChEBI" id="CHEBI:24646"/>
        <dbReference type="ChEBI" id="CHEBI:57540"/>
        <dbReference type="ChEBI" id="CHEBI:57945"/>
        <dbReference type="ChEBI" id="CHEBI:132124"/>
    </reaction>
</comment>
<comment type="subunit">
    <text evidence="1">NDH-1 is composed of 14 different subunits. Subunits NuoB, C, D, E, F, and G constitute the peripheral sector of the complex.</text>
</comment>
<comment type="subcellular location">
    <subcellularLocation>
        <location evidence="1">Cell inner membrane</location>
        <topology evidence="1">Peripheral membrane protein</topology>
        <orientation evidence="1">Cytoplasmic side</orientation>
    </subcellularLocation>
</comment>
<comment type="similarity">
    <text evidence="1">Belongs to the complex I 30 kDa subunit family.</text>
</comment>
<reference key="1">
    <citation type="journal article" date="2010" name="Genome Biol. Evol.">
        <title>Continuing evolution of Burkholderia mallei through genome reduction and large-scale rearrangements.</title>
        <authorList>
            <person name="Losada L."/>
            <person name="Ronning C.M."/>
            <person name="DeShazer D."/>
            <person name="Woods D."/>
            <person name="Fedorova N."/>
            <person name="Kim H.S."/>
            <person name="Shabalina S.A."/>
            <person name="Pearson T.R."/>
            <person name="Brinkac L."/>
            <person name="Tan P."/>
            <person name="Nandi T."/>
            <person name="Crabtree J."/>
            <person name="Badger J."/>
            <person name="Beckstrom-Sternberg S."/>
            <person name="Saqib M."/>
            <person name="Schutzer S.E."/>
            <person name="Keim P."/>
            <person name="Nierman W.C."/>
        </authorList>
    </citation>
    <scope>NUCLEOTIDE SEQUENCE [LARGE SCALE GENOMIC DNA]</scope>
    <source>
        <strain>NCTC 10247</strain>
    </source>
</reference>
<dbReference type="EC" id="7.1.1.-" evidence="1"/>
<dbReference type="EMBL" id="CP000548">
    <property type="protein sequence ID" value="ABO07018.1"/>
    <property type="molecule type" value="Genomic_DNA"/>
</dbReference>
<dbReference type="RefSeq" id="WP_004186121.1">
    <property type="nucleotide sequence ID" value="NZ_CP007802.1"/>
</dbReference>
<dbReference type="SMR" id="A3MIA3"/>
<dbReference type="KEGG" id="bmaz:BM44_2596"/>
<dbReference type="KEGG" id="bmn:BMA10247_0415"/>
<dbReference type="PATRIC" id="fig|320389.8.peg.2930"/>
<dbReference type="GO" id="GO:0005886">
    <property type="term" value="C:plasma membrane"/>
    <property type="evidence" value="ECO:0007669"/>
    <property type="project" value="UniProtKB-SubCell"/>
</dbReference>
<dbReference type="GO" id="GO:0008137">
    <property type="term" value="F:NADH dehydrogenase (ubiquinone) activity"/>
    <property type="evidence" value="ECO:0007669"/>
    <property type="project" value="InterPro"/>
</dbReference>
<dbReference type="GO" id="GO:0050136">
    <property type="term" value="F:NADH:ubiquinone reductase (non-electrogenic) activity"/>
    <property type="evidence" value="ECO:0007669"/>
    <property type="project" value="UniProtKB-UniRule"/>
</dbReference>
<dbReference type="GO" id="GO:0048038">
    <property type="term" value="F:quinone binding"/>
    <property type="evidence" value="ECO:0007669"/>
    <property type="project" value="UniProtKB-KW"/>
</dbReference>
<dbReference type="Gene3D" id="3.30.460.80">
    <property type="entry name" value="NADH:ubiquinone oxidoreductase, 30kDa subunit"/>
    <property type="match status" value="1"/>
</dbReference>
<dbReference type="HAMAP" id="MF_01357">
    <property type="entry name" value="NDH1_NuoC"/>
    <property type="match status" value="1"/>
</dbReference>
<dbReference type="InterPro" id="IPR010218">
    <property type="entry name" value="NADH_DH_suC"/>
</dbReference>
<dbReference type="InterPro" id="IPR037232">
    <property type="entry name" value="NADH_quin_OxRdtase_su_C/D-like"/>
</dbReference>
<dbReference type="InterPro" id="IPR001268">
    <property type="entry name" value="NADH_UbQ_OxRdtase_30kDa_su"/>
</dbReference>
<dbReference type="InterPro" id="IPR020396">
    <property type="entry name" value="NADH_UbQ_OxRdtase_CS"/>
</dbReference>
<dbReference type="NCBIfam" id="TIGR01961">
    <property type="entry name" value="NuoC_fam"/>
    <property type="match status" value="1"/>
</dbReference>
<dbReference type="NCBIfam" id="NF004730">
    <property type="entry name" value="PRK06074.1-1"/>
    <property type="match status" value="1"/>
</dbReference>
<dbReference type="PANTHER" id="PTHR10884:SF14">
    <property type="entry name" value="NADH DEHYDROGENASE [UBIQUINONE] IRON-SULFUR PROTEIN 3, MITOCHONDRIAL"/>
    <property type="match status" value="1"/>
</dbReference>
<dbReference type="PANTHER" id="PTHR10884">
    <property type="entry name" value="NADH DEHYDROGENASE UBIQUINONE IRON-SULFUR PROTEIN 3"/>
    <property type="match status" value="1"/>
</dbReference>
<dbReference type="Pfam" id="PF00329">
    <property type="entry name" value="Complex1_30kDa"/>
    <property type="match status" value="1"/>
</dbReference>
<dbReference type="SUPFAM" id="SSF143243">
    <property type="entry name" value="Nqo5-like"/>
    <property type="match status" value="1"/>
</dbReference>
<dbReference type="PROSITE" id="PS00542">
    <property type="entry name" value="COMPLEX1_30K"/>
    <property type="match status" value="1"/>
</dbReference>
<accession>A3MIA3</accession>
<feature type="chain" id="PRO_0000358066" description="NADH-quinone oxidoreductase subunit C">
    <location>
        <begin position="1"/>
        <end position="200"/>
    </location>
</feature>
<gene>
    <name evidence="1" type="primary">nuoC</name>
    <name type="ordered locus">BMA10247_0415</name>
</gene>
<name>NUOC_BURM7</name>
<protein>
    <recommendedName>
        <fullName evidence="1">NADH-quinone oxidoreductase subunit C</fullName>
        <ecNumber evidence="1">7.1.1.-</ecNumber>
    </recommendedName>
    <alternativeName>
        <fullName evidence="1">NADH dehydrogenase I subunit C</fullName>
    </alternativeName>
    <alternativeName>
        <fullName evidence="1">NDH-1 subunit C</fullName>
    </alternativeName>
</protein>
<sequence>MASKIETLKANLEAALGARAVSLVEAVGELTLVVKASDYLEVAKQLRDDRSLGFEQLIDLCGVDYQTYGDGAYDGPRFAAVLHLLSVANNWRLRVRVFASDDDLPIVPSVVDIWNSANWYEREAFDLYGIVFEGHPDLRRILTDYGFIGHPFRKDFPVSGYVEMRYDPQEKRVVYQPVTIEPREITPRVIREDRYGGLKH</sequence>
<organism>
    <name type="scientific">Burkholderia mallei (strain NCTC 10247)</name>
    <dbReference type="NCBI Taxonomy" id="320389"/>
    <lineage>
        <taxon>Bacteria</taxon>
        <taxon>Pseudomonadati</taxon>
        <taxon>Pseudomonadota</taxon>
        <taxon>Betaproteobacteria</taxon>
        <taxon>Burkholderiales</taxon>
        <taxon>Burkholderiaceae</taxon>
        <taxon>Burkholderia</taxon>
        <taxon>pseudomallei group</taxon>
    </lineage>
</organism>